<gene>
    <name evidence="26" type="primary">MTMR4</name>
    <name evidence="25" type="synonym">KIAA0647</name>
    <name evidence="26" type="synonym">ZFYVE11</name>
</gene>
<sequence length="1195" mass="133353">MGEEGPPSLEYIQAKDLFPPKELVKEEENLQVPFTVLQGEGVEFLGRAADALIAISNYRLHIKFKDSVINVPLRMIDSVESRDMFQLHISCKDSKVVRCHFSTFKQCQEWLSRLSRATARPAKPEDLFAFAYHAWCLGLTEEDQHTHLCQPGEHIRCRQEAELARMGFDLQNVWRVSHINSNYKLCPSYPQKLLVPVWITDKELENVASFRSWKRIPVVVYRHLRNGAAIARCSQPEISWWGWRNADDEYLVTSIAKACALDPGTRATGGSLSTGNNDTSEACDADFDSSLTACSGVESTAAPQKLLILDARSYTAAVANRAKGGGCECEEYYPNCEVVFMGMANIHAIRNSFQYLRAVCSQMPDPSNWLSALESTKWLQHLSVMLKAAVLVANTVDREGRPVLVHCSDGWDRTPQIVALAKILLDPYYRTLEGFQVLVESDWLDFGHKFGDRCGHQENVEDQNEQCPVFLQWLDSVHQLLKQFPCLFEFNEAFLVKLVQHTYSCLYGTFLANNPCEREKRNIYKRTCSVWALLRAGNKNFHNFLYTPSSDMVLHPVCHVRALHLWTAVYLPASSPCTLGEENMDLYLSPVAQSQEFSGRSLDRLPKTRSMDDLLSACDTSSPLTRTSSDPNLNNHCQEVRVGLEPWHSNPEGSETSFVDSGVGGPQQTVGEVGLPPPLPSSQKDYLSNKPFKSHKSCSPSYKLLNTAVPREMKSNTSDPEIKVLEETKGPAPDPSAQDELGRTLDGIGEPPEHCPETEAVSALSKVISNKCDGVCNFPESSQNSPTGTPQQAQPDSMLGVPSKCVLDHSLSTVCNPPSAACQTPLDPSTDFLNQDPSGSVASISHQEQLSSVPDLTHGEEDIGKRGNNRNGQLLENPRFGKMPLELVRKPISQSQISEFSFLGSNWDSFQGMVTSFPSGEATPRRLLSYGCCSKRPNSKQMRATGPCFGGQWAQREGVKSPVCSSHSNGHCTGPGGKNQMWLSSHPKQVSSTKPVPLNCPSPVPPLYLDDDGLPFPTDVIQHRLRQIEAGYKQEVEQLRRQVRELQMRLDIRHCCAPPAEPPMDYEDDFTCLKESDGSDTEDFGSDHSEDCLSEASWEPVDKKETEVTRWVPDHMASHCYNCDCEFWLAKRRHHCRNCGNVFCAGCCHLKLPIPDQQLYDPVLVCNSCYEHIQVSRARELMSQQLKKPIATASS</sequence>
<evidence type="ECO:0000250" key="1">
    <source>
        <dbReference type="UniProtKB" id="Q13614"/>
    </source>
</evidence>
<evidence type="ECO:0000255" key="2"/>
<evidence type="ECO:0000255" key="3">
    <source>
        <dbReference type="PROSITE-ProRule" id="PRU00091"/>
    </source>
</evidence>
<evidence type="ECO:0000255" key="4">
    <source>
        <dbReference type="PROSITE-ProRule" id="PRU00669"/>
    </source>
</evidence>
<evidence type="ECO:0000256" key="5">
    <source>
        <dbReference type="SAM" id="MobiDB-lite"/>
    </source>
</evidence>
<evidence type="ECO:0000269" key="6">
    <source>
    </source>
</evidence>
<evidence type="ECO:0000269" key="7">
    <source>
    </source>
</evidence>
<evidence type="ECO:0000269" key="8">
    <source>
    </source>
</evidence>
<evidence type="ECO:0000269" key="9">
    <source>
    </source>
</evidence>
<evidence type="ECO:0000269" key="10">
    <source>
    </source>
</evidence>
<evidence type="ECO:0000269" key="11">
    <source>
    </source>
</evidence>
<evidence type="ECO:0000269" key="12">
    <source>
    </source>
</evidence>
<evidence type="ECO:0000269" key="13">
    <source>
    </source>
</evidence>
<evidence type="ECO:0000269" key="14">
    <source>
    </source>
</evidence>
<evidence type="ECO:0000269" key="15">
    <source>
    </source>
</evidence>
<evidence type="ECO:0000269" key="16">
    <source>
    </source>
</evidence>
<evidence type="ECO:0000269" key="17">
    <source>
    </source>
</evidence>
<evidence type="ECO:0000269" key="18">
    <source>
    </source>
</evidence>
<evidence type="ECO:0000303" key="19">
    <source>
    </source>
</evidence>
<evidence type="ECO:0000305" key="20"/>
<evidence type="ECO:0000305" key="21">
    <source>
    </source>
</evidence>
<evidence type="ECO:0000305" key="22">
    <source>
    </source>
</evidence>
<evidence type="ECO:0000305" key="23">
    <source>
    </source>
</evidence>
<evidence type="ECO:0000305" key="24">
    <source>
    </source>
</evidence>
<evidence type="ECO:0000312" key="25">
    <source>
        <dbReference type="EMBL" id="BAA31622.2"/>
    </source>
</evidence>
<evidence type="ECO:0000312" key="26">
    <source>
        <dbReference type="HGNC" id="HGNC:7452"/>
    </source>
</evidence>
<evidence type="ECO:0007744" key="27">
    <source>
    </source>
</evidence>
<evidence type="ECO:0007744" key="28">
    <source>
    </source>
</evidence>
<accession>Q9NYA4</accession>
<accession>D3DTZ6</accession>
<accession>Q8IV27</accession>
<accession>Q9Y4D5</accession>
<keyword id="KW-0175">Coiled coil</keyword>
<keyword id="KW-0968">Cytoplasmic vesicle</keyword>
<keyword id="KW-0967">Endosome</keyword>
<keyword id="KW-0378">Hydrolase</keyword>
<keyword id="KW-0472">Membrane</keyword>
<keyword id="KW-0479">Metal-binding</keyword>
<keyword id="KW-0597">Phosphoprotein</keyword>
<keyword id="KW-1267">Proteomics identification</keyword>
<keyword id="KW-1185">Reference proteome</keyword>
<keyword id="KW-0832">Ubl conjugation</keyword>
<keyword id="KW-0862">Zinc</keyword>
<keyword id="KW-0863">Zinc-finger</keyword>
<dbReference type="EC" id="3.1.3.95" evidence="11"/>
<dbReference type="EMBL" id="AF264717">
    <property type="protein sequence ID" value="AAF72539.1"/>
    <property type="molecule type" value="mRNA"/>
</dbReference>
<dbReference type="EMBL" id="AB014547">
    <property type="protein sequence ID" value="BAA31622.2"/>
    <property type="molecule type" value="mRNA"/>
</dbReference>
<dbReference type="EMBL" id="AC005666">
    <property type="status" value="NOT_ANNOTATED_CDS"/>
    <property type="molecule type" value="Genomic_DNA"/>
</dbReference>
<dbReference type="EMBL" id="CH471109">
    <property type="protein sequence ID" value="EAW94454.1"/>
    <property type="molecule type" value="Genomic_DNA"/>
</dbReference>
<dbReference type="EMBL" id="CH471109">
    <property type="protein sequence ID" value="EAW94455.1"/>
    <property type="molecule type" value="Genomic_DNA"/>
</dbReference>
<dbReference type="EMBL" id="BC035609">
    <property type="protein sequence ID" value="AAH35609.1"/>
    <property type="molecule type" value="mRNA"/>
</dbReference>
<dbReference type="CCDS" id="CCDS11608.1"/>
<dbReference type="PIR" id="T00375">
    <property type="entry name" value="T00375"/>
</dbReference>
<dbReference type="RefSeq" id="NP_004678.3">
    <property type="nucleotide sequence ID" value="NM_004687.4"/>
</dbReference>
<dbReference type="RefSeq" id="XP_005257843.1">
    <property type="nucleotide sequence ID" value="XM_005257786.6"/>
</dbReference>
<dbReference type="RefSeq" id="XP_006722231.1">
    <property type="nucleotide sequence ID" value="XM_006722168.5"/>
</dbReference>
<dbReference type="RefSeq" id="XP_047292975.1">
    <property type="nucleotide sequence ID" value="XM_047437019.1"/>
</dbReference>
<dbReference type="SMR" id="Q9NYA4"/>
<dbReference type="BioGRID" id="114560">
    <property type="interactions" value="184"/>
</dbReference>
<dbReference type="FunCoup" id="Q9NYA4">
    <property type="interactions" value="3035"/>
</dbReference>
<dbReference type="IntAct" id="Q9NYA4">
    <property type="interactions" value="80"/>
</dbReference>
<dbReference type="MINT" id="Q9NYA4"/>
<dbReference type="STRING" id="9606.ENSP00000325285"/>
<dbReference type="DEPOD" id="MTMR4"/>
<dbReference type="GlyCosmos" id="Q9NYA4">
    <property type="glycosylation" value="1 site, 1 glycan"/>
</dbReference>
<dbReference type="GlyGen" id="Q9NYA4">
    <property type="glycosylation" value="1 site, 1 O-linked glycan (1 site)"/>
</dbReference>
<dbReference type="iPTMnet" id="Q9NYA4"/>
<dbReference type="PhosphoSitePlus" id="Q9NYA4"/>
<dbReference type="BioMuta" id="MTMR4"/>
<dbReference type="DMDM" id="296438298"/>
<dbReference type="jPOST" id="Q9NYA4"/>
<dbReference type="MassIVE" id="Q9NYA4"/>
<dbReference type="PaxDb" id="9606-ENSP00000325285"/>
<dbReference type="PeptideAtlas" id="Q9NYA4"/>
<dbReference type="ProteomicsDB" id="83205"/>
<dbReference type="Pumba" id="Q9NYA4"/>
<dbReference type="Antibodypedia" id="30984">
    <property type="antibodies" value="183 antibodies from 26 providers"/>
</dbReference>
<dbReference type="DNASU" id="9110"/>
<dbReference type="Ensembl" id="ENST00000323456.9">
    <property type="protein sequence ID" value="ENSP00000325285.5"/>
    <property type="gene ID" value="ENSG00000108389.10"/>
</dbReference>
<dbReference type="GeneID" id="9110"/>
<dbReference type="KEGG" id="hsa:9110"/>
<dbReference type="UCSC" id="uc002iwj.3">
    <property type="organism name" value="human"/>
</dbReference>
<dbReference type="AGR" id="HGNC:7452"/>
<dbReference type="CTD" id="9110"/>
<dbReference type="DisGeNET" id="9110"/>
<dbReference type="GeneCards" id="MTMR4"/>
<dbReference type="HGNC" id="HGNC:7452">
    <property type="gene designation" value="MTMR4"/>
</dbReference>
<dbReference type="HPA" id="ENSG00000108389">
    <property type="expression patterns" value="Low tissue specificity"/>
</dbReference>
<dbReference type="MIM" id="603559">
    <property type="type" value="gene"/>
</dbReference>
<dbReference type="neXtProt" id="NX_Q9NYA4"/>
<dbReference type="OpenTargets" id="ENSG00000108389"/>
<dbReference type="PharmGKB" id="PA31255"/>
<dbReference type="VEuPathDB" id="HostDB:ENSG00000108389"/>
<dbReference type="eggNOG" id="KOG4471">
    <property type="taxonomic scope" value="Eukaryota"/>
</dbReference>
<dbReference type="GeneTree" id="ENSGT00940000158976"/>
<dbReference type="HOGENOM" id="CLU_001839_2_2_1"/>
<dbReference type="InParanoid" id="Q9NYA4"/>
<dbReference type="OMA" id="TRWLQHM"/>
<dbReference type="OrthoDB" id="271628at2759"/>
<dbReference type="PAN-GO" id="Q9NYA4">
    <property type="GO annotations" value="7 GO annotations based on evolutionary models"/>
</dbReference>
<dbReference type="PhylomeDB" id="Q9NYA4"/>
<dbReference type="TreeFam" id="TF315197"/>
<dbReference type="PathwayCommons" id="Q9NYA4"/>
<dbReference type="Reactome" id="R-HSA-1660516">
    <property type="pathway name" value="Synthesis of PIPs at the early endosome membrane"/>
</dbReference>
<dbReference type="Reactome" id="R-HSA-1660517">
    <property type="pathway name" value="Synthesis of PIPs at the late endosome membrane"/>
</dbReference>
<dbReference type="Reactome" id="R-HSA-2173788">
    <property type="pathway name" value="Downregulation of TGF-beta receptor signaling"/>
</dbReference>
<dbReference type="SignaLink" id="Q9NYA4"/>
<dbReference type="SIGNOR" id="Q9NYA4"/>
<dbReference type="BioGRID-ORCS" id="9110">
    <property type="hits" value="19 hits in 1171 CRISPR screens"/>
</dbReference>
<dbReference type="ChiTaRS" id="MTMR4">
    <property type="organism name" value="human"/>
</dbReference>
<dbReference type="GenomeRNAi" id="9110"/>
<dbReference type="Pharos" id="Q9NYA4">
    <property type="development level" value="Tbio"/>
</dbReference>
<dbReference type="PRO" id="PR:Q9NYA4"/>
<dbReference type="Proteomes" id="UP000005640">
    <property type="component" value="Chromosome 17"/>
</dbReference>
<dbReference type="RNAct" id="Q9NYA4">
    <property type="molecule type" value="protein"/>
</dbReference>
<dbReference type="Bgee" id="ENSG00000108389">
    <property type="expression patterns" value="Expressed in middle temporal gyrus and 209 other cell types or tissues"/>
</dbReference>
<dbReference type="ExpressionAtlas" id="Q9NYA4">
    <property type="expression patterns" value="baseline and differential"/>
</dbReference>
<dbReference type="GO" id="GO:0005737">
    <property type="term" value="C:cytoplasm"/>
    <property type="evidence" value="ECO:0000318"/>
    <property type="project" value="GO_Central"/>
</dbReference>
<dbReference type="GO" id="GO:0005829">
    <property type="term" value="C:cytosol"/>
    <property type="evidence" value="ECO:0000304"/>
    <property type="project" value="Reactome"/>
</dbReference>
<dbReference type="GO" id="GO:0031901">
    <property type="term" value="C:early endosome membrane"/>
    <property type="evidence" value="ECO:0000314"/>
    <property type="project" value="UniProtKB"/>
</dbReference>
<dbReference type="GO" id="GO:0036186">
    <property type="term" value="C:early phagosome membrane"/>
    <property type="evidence" value="ECO:0000314"/>
    <property type="project" value="UniProtKB"/>
</dbReference>
<dbReference type="GO" id="GO:0010008">
    <property type="term" value="C:endosome membrane"/>
    <property type="evidence" value="ECO:0000314"/>
    <property type="project" value="UniProtKB"/>
</dbReference>
<dbReference type="GO" id="GO:0005615">
    <property type="term" value="C:extracellular space"/>
    <property type="evidence" value="ECO:0007005"/>
    <property type="project" value="UniProtKB"/>
</dbReference>
<dbReference type="GO" id="GO:0031902">
    <property type="term" value="C:late endosome membrane"/>
    <property type="evidence" value="ECO:0000314"/>
    <property type="project" value="UniProtKB"/>
</dbReference>
<dbReference type="GO" id="GO:0016020">
    <property type="term" value="C:membrane"/>
    <property type="evidence" value="ECO:0000314"/>
    <property type="project" value="UniProtKB"/>
</dbReference>
<dbReference type="GO" id="GO:0055038">
    <property type="term" value="C:recycling endosome membrane"/>
    <property type="evidence" value="ECO:0000314"/>
    <property type="project" value="UniProtKB"/>
</dbReference>
<dbReference type="GO" id="GO:0060090">
    <property type="term" value="F:molecular adaptor activity"/>
    <property type="evidence" value="ECO:0000314"/>
    <property type="project" value="UniProtKB"/>
</dbReference>
<dbReference type="GO" id="GO:0052629">
    <property type="term" value="F:phosphatidylinositol-3,5-bisphosphate 3-phosphatase activity"/>
    <property type="evidence" value="ECO:0000314"/>
    <property type="project" value="UniProtKB"/>
</dbReference>
<dbReference type="GO" id="GO:0004438">
    <property type="term" value="F:phosphatidylinositol-3-phosphate phosphatase activity"/>
    <property type="evidence" value="ECO:0000314"/>
    <property type="project" value="UniProtKB"/>
</dbReference>
<dbReference type="GO" id="GO:0019903">
    <property type="term" value="F:protein phosphatase binding"/>
    <property type="evidence" value="ECO:0000353"/>
    <property type="project" value="UniProtKB"/>
</dbReference>
<dbReference type="GO" id="GO:0004722">
    <property type="term" value="F:protein serine/threonine phosphatase activity"/>
    <property type="evidence" value="ECO:0000304"/>
    <property type="project" value="Reactome"/>
</dbReference>
<dbReference type="GO" id="GO:0004725">
    <property type="term" value="F:protein tyrosine phosphatase activity"/>
    <property type="evidence" value="ECO:0007669"/>
    <property type="project" value="UniProtKB-EC"/>
</dbReference>
<dbReference type="GO" id="GO:0070412">
    <property type="term" value="F:R-SMAD binding"/>
    <property type="evidence" value="ECO:0000314"/>
    <property type="project" value="FlyBase"/>
</dbReference>
<dbReference type="GO" id="GO:0008270">
    <property type="term" value="F:zinc ion binding"/>
    <property type="evidence" value="ECO:0007669"/>
    <property type="project" value="UniProtKB-KW"/>
</dbReference>
<dbReference type="GO" id="GO:0061952">
    <property type="term" value="P:midbody abscission"/>
    <property type="evidence" value="ECO:0000315"/>
    <property type="project" value="UniProtKB"/>
</dbReference>
<dbReference type="GO" id="GO:0030514">
    <property type="term" value="P:negative regulation of BMP signaling pathway"/>
    <property type="evidence" value="ECO:0000315"/>
    <property type="project" value="FlyBase"/>
</dbReference>
<dbReference type="GO" id="GO:2001136">
    <property type="term" value="P:negative regulation of endocytic recycling"/>
    <property type="evidence" value="ECO:0000315"/>
    <property type="project" value="UniProtKB"/>
</dbReference>
<dbReference type="GO" id="GO:0030512">
    <property type="term" value="P:negative regulation of transforming growth factor beta receptor signaling pathway"/>
    <property type="evidence" value="ECO:0000315"/>
    <property type="project" value="UniProtKB"/>
</dbReference>
<dbReference type="GO" id="GO:0090382">
    <property type="term" value="P:phagosome maturation"/>
    <property type="evidence" value="ECO:0000315"/>
    <property type="project" value="UniProtKB"/>
</dbReference>
<dbReference type="GO" id="GO:0006661">
    <property type="term" value="P:phosphatidylinositol biosynthetic process"/>
    <property type="evidence" value="ECO:0000304"/>
    <property type="project" value="Reactome"/>
</dbReference>
<dbReference type="GO" id="GO:0046856">
    <property type="term" value="P:phosphatidylinositol dephosphorylation"/>
    <property type="evidence" value="ECO:0000314"/>
    <property type="project" value="UniProtKB"/>
</dbReference>
<dbReference type="CDD" id="cd15733">
    <property type="entry name" value="FYVE_MTMR4"/>
    <property type="match status" value="1"/>
</dbReference>
<dbReference type="CDD" id="cd13342">
    <property type="entry name" value="PH-GRAM_MTMR4"/>
    <property type="match status" value="1"/>
</dbReference>
<dbReference type="CDD" id="cd14587">
    <property type="entry name" value="PTP-MTMR4"/>
    <property type="match status" value="1"/>
</dbReference>
<dbReference type="FunFam" id="3.30.40.10:FF:000073">
    <property type="entry name" value="myotubularin-related protein 4 isoform X2"/>
    <property type="match status" value="1"/>
</dbReference>
<dbReference type="Gene3D" id="3.30.40.10">
    <property type="entry name" value="Zinc/RING finger domain, C3HC4 (zinc finger)"/>
    <property type="match status" value="1"/>
</dbReference>
<dbReference type="InterPro" id="IPR046978">
    <property type="entry name" value="MTMR4_FYVE"/>
</dbReference>
<dbReference type="InterPro" id="IPR035997">
    <property type="entry name" value="MTMR4_PH-GRAM"/>
</dbReference>
<dbReference type="InterPro" id="IPR030590">
    <property type="entry name" value="MTMR4_PTP"/>
</dbReference>
<dbReference type="InterPro" id="IPR030564">
    <property type="entry name" value="Myotubularin"/>
</dbReference>
<dbReference type="InterPro" id="IPR010569">
    <property type="entry name" value="Myotubularin-like_Pase_dom"/>
</dbReference>
<dbReference type="InterPro" id="IPR029021">
    <property type="entry name" value="Prot-tyrosine_phosphatase-like"/>
</dbReference>
<dbReference type="InterPro" id="IPR016130">
    <property type="entry name" value="Tyr_Pase_AS"/>
</dbReference>
<dbReference type="InterPro" id="IPR000387">
    <property type="entry name" value="Tyr_Pase_dom"/>
</dbReference>
<dbReference type="InterPro" id="IPR000306">
    <property type="entry name" value="Znf_FYVE"/>
</dbReference>
<dbReference type="InterPro" id="IPR017455">
    <property type="entry name" value="Znf_FYVE-rel"/>
</dbReference>
<dbReference type="InterPro" id="IPR011011">
    <property type="entry name" value="Znf_FYVE_PHD"/>
</dbReference>
<dbReference type="InterPro" id="IPR013083">
    <property type="entry name" value="Znf_RING/FYVE/PHD"/>
</dbReference>
<dbReference type="PANTHER" id="PTHR10807">
    <property type="entry name" value="MYOTUBULARIN-RELATED"/>
    <property type="match status" value="1"/>
</dbReference>
<dbReference type="PANTHER" id="PTHR10807:SF64">
    <property type="entry name" value="MYOTUBULARIN-RELATED PROTEIN 4"/>
    <property type="match status" value="1"/>
</dbReference>
<dbReference type="Pfam" id="PF01363">
    <property type="entry name" value="FYVE"/>
    <property type="match status" value="1"/>
</dbReference>
<dbReference type="Pfam" id="PF06602">
    <property type="entry name" value="Myotub-related"/>
    <property type="match status" value="1"/>
</dbReference>
<dbReference type="SMART" id="SM00064">
    <property type="entry name" value="FYVE"/>
    <property type="match status" value="1"/>
</dbReference>
<dbReference type="SUPFAM" id="SSF52799">
    <property type="entry name" value="(Phosphotyrosine protein) phosphatases II"/>
    <property type="match status" value="1"/>
</dbReference>
<dbReference type="SUPFAM" id="SSF57903">
    <property type="entry name" value="FYVE/PHD zinc finger"/>
    <property type="match status" value="1"/>
</dbReference>
<dbReference type="SUPFAM" id="SSF50729">
    <property type="entry name" value="PH domain-like"/>
    <property type="match status" value="1"/>
</dbReference>
<dbReference type="PROSITE" id="PS51339">
    <property type="entry name" value="PPASE_MYOTUBULARIN"/>
    <property type="match status" value="1"/>
</dbReference>
<dbReference type="PROSITE" id="PS00383">
    <property type="entry name" value="TYR_PHOSPHATASE_1"/>
    <property type="match status" value="1"/>
</dbReference>
<dbReference type="PROSITE" id="PS50056">
    <property type="entry name" value="TYR_PHOSPHATASE_2"/>
    <property type="match status" value="1"/>
</dbReference>
<dbReference type="PROSITE" id="PS50178">
    <property type="entry name" value="ZF_FYVE"/>
    <property type="match status" value="1"/>
</dbReference>
<feature type="chain" id="PRO_0000304809" description="Phosphatidylinositol-3,5-bisphosphate 3-phosphatase MTMR4">
    <location>
        <begin position="1"/>
        <end position="1195"/>
    </location>
</feature>
<feature type="domain" description="Myotubularin phosphatase" evidence="4">
    <location>
        <begin position="153"/>
        <end position="570"/>
    </location>
</feature>
<feature type="zinc finger region" description="FYVE-type" evidence="3">
    <location>
        <begin position="1114"/>
        <end position="1174"/>
    </location>
</feature>
<feature type="region of interest" description="Disordered" evidence="5">
    <location>
        <begin position="645"/>
        <end position="756"/>
    </location>
</feature>
<feature type="region of interest" description="Disordered" evidence="5">
    <location>
        <begin position="780"/>
        <end position="800"/>
    </location>
</feature>
<feature type="region of interest" description="Disordered" evidence="5">
    <location>
        <begin position="827"/>
        <end position="877"/>
    </location>
</feature>
<feature type="coiled-coil region" evidence="2">
    <location>
        <begin position="1023"/>
        <end position="1055"/>
    </location>
</feature>
<feature type="short sequence motif" description="PY-motif; substrate motif for NEDD4" evidence="9">
    <location>
        <begin position="1004"/>
        <end position="1008"/>
    </location>
</feature>
<feature type="compositionally biased region" description="Basic and acidic residues" evidence="5">
    <location>
        <begin position="720"/>
        <end position="729"/>
    </location>
</feature>
<feature type="compositionally biased region" description="Polar residues" evidence="5">
    <location>
        <begin position="780"/>
        <end position="795"/>
    </location>
</feature>
<feature type="compositionally biased region" description="Polar residues" evidence="5">
    <location>
        <begin position="831"/>
        <end position="854"/>
    </location>
</feature>
<feature type="active site" description="Phosphocysteine intermediate" evidence="1">
    <location>
        <position position="407"/>
    </location>
</feature>
<feature type="binding site" evidence="1">
    <location>
        <position position="320"/>
    </location>
    <ligand>
        <name>a 1,2-diacyl-sn-glycero-3-phospho-(1D-myo-inositol-3,5-bisphosphate)</name>
        <dbReference type="ChEBI" id="CHEBI:57923"/>
    </ligand>
</feature>
<feature type="binding site" evidence="1">
    <location>
        <position position="320"/>
    </location>
    <ligand>
        <name>a 1,2-diacyl-sn-glycero-3-phospho-(1D-myo-inositol-3-phosphate)</name>
        <dbReference type="ChEBI" id="CHEBI:58088"/>
    </ligand>
</feature>
<feature type="binding site" evidence="1">
    <location>
        <position position="345"/>
    </location>
    <ligand>
        <name>a 1,2-diacyl-sn-glycero-3-phospho-(1D-myo-inositol-3,5-bisphosphate)</name>
        <dbReference type="ChEBI" id="CHEBI:57923"/>
    </ligand>
</feature>
<feature type="binding site" evidence="1">
    <location>
        <position position="345"/>
    </location>
    <ligand>
        <name>a 1,2-diacyl-sn-glycero-3-phospho-(1D-myo-inositol-3-phosphate)</name>
        <dbReference type="ChEBI" id="CHEBI:58088"/>
    </ligand>
</feature>
<feature type="binding site" evidence="1">
    <location>
        <position position="346"/>
    </location>
    <ligand>
        <name>a 1,2-diacyl-sn-glycero-3-phospho-(1D-myo-inositol-3,5-bisphosphate)</name>
        <dbReference type="ChEBI" id="CHEBI:57923"/>
    </ligand>
</feature>
<feature type="binding site" evidence="1">
    <location>
        <position position="346"/>
    </location>
    <ligand>
        <name>a 1,2-diacyl-sn-glycero-3-phospho-(1D-myo-inositol-3-phosphate)</name>
        <dbReference type="ChEBI" id="CHEBI:58088"/>
    </ligand>
</feature>
<feature type="binding site" evidence="1">
    <location>
        <position position="408"/>
    </location>
    <ligand>
        <name>a 1,2-diacyl-sn-glycero-3-phospho-(1D-myo-inositol-3,5-bisphosphate)</name>
        <dbReference type="ChEBI" id="CHEBI:57923"/>
    </ligand>
</feature>
<feature type="binding site" evidence="1">
    <location>
        <position position="408"/>
    </location>
    <ligand>
        <name>a 1,2-diacyl-sn-glycero-3-phospho-(1D-myo-inositol-3-phosphate)</name>
        <dbReference type="ChEBI" id="CHEBI:58088"/>
    </ligand>
</feature>
<feature type="binding site" evidence="1">
    <location>
        <position position="409"/>
    </location>
    <ligand>
        <name>a 1,2-diacyl-sn-glycero-3-phospho-(1D-myo-inositol-3,5-bisphosphate)</name>
        <dbReference type="ChEBI" id="CHEBI:57923"/>
    </ligand>
</feature>
<feature type="binding site" evidence="1">
    <location>
        <position position="409"/>
    </location>
    <ligand>
        <name>a 1,2-diacyl-sn-glycero-3-phospho-(1D-myo-inositol-3-phosphate)</name>
        <dbReference type="ChEBI" id="CHEBI:58088"/>
    </ligand>
</feature>
<feature type="binding site" evidence="1">
    <location>
        <position position="410"/>
    </location>
    <ligand>
        <name>a 1,2-diacyl-sn-glycero-3-phospho-(1D-myo-inositol-3,5-bisphosphate)</name>
        <dbReference type="ChEBI" id="CHEBI:57923"/>
    </ligand>
</feature>
<feature type="binding site" evidence="1">
    <location>
        <position position="410"/>
    </location>
    <ligand>
        <name>a 1,2-diacyl-sn-glycero-3-phospho-(1D-myo-inositol-3-phosphate)</name>
        <dbReference type="ChEBI" id="CHEBI:58088"/>
    </ligand>
</feature>
<feature type="binding site" evidence="1">
    <location>
        <position position="411"/>
    </location>
    <ligand>
        <name>a 1,2-diacyl-sn-glycero-3-phospho-(1D-myo-inositol-3,5-bisphosphate)</name>
        <dbReference type="ChEBI" id="CHEBI:57923"/>
    </ligand>
</feature>
<feature type="binding site" evidence="1">
    <location>
        <position position="411"/>
    </location>
    <ligand>
        <name>a 1,2-diacyl-sn-glycero-3-phospho-(1D-myo-inositol-3-phosphate)</name>
        <dbReference type="ChEBI" id="CHEBI:58088"/>
    </ligand>
</feature>
<feature type="binding site" evidence="1">
    <location>
        <position position="412"/>
    </location>
    <ligand>
        <name>a 1,2-diacyl-sn-glycero-3-phospho-(1D-myo-inositol-3,5-bisphosphate)</name>
        <dbReference type="ChEBI" id="CHEBI:57923"/>
    </ligand>
</feature>
<feature type="binding site" evidence="1">
    <location>
        <position position="412"/>
    </location>
    <ligand>
        <name>a 1,2-diacyl-sn-glycero-3-phospho-(1D-myo-inositol-3-phosphate)</name>
        <dbReference type="ChEBI" id="CHEBI:58088"/>
    </ligand>
</feature>
<feature type="binding site" evidence="1">
    <location>
        <position position="413"/>
    </location>
    <ligand>
        <name>a 1,2-diacyl-sn-glycero-3-phospho-(1D-myo-inositol-3,5-bisphosphate)</name>
        <dbReference type="ChEBI" id="CHEBI:57923"/>
    </ligand>
</feature>
<feature type="binding site" evidence="1">
    <location>
        <position position="413"/>
    </location>
    <ligand>
        <name>a 1,2-diacyl-sn-glycero-3-phospho-(1D-myo-inositol-3-phosphate)</name>
        <dbReference type="ChEBI" id="CHEBI:58088"/>
    </ligand>
</feature>
<feature type="binding site" evidence="1">
    <location>
        <position position="449"/>
    </location>
    <ligand>
        <name>a 1,2-diacyl-sn-glycero-3-phospho-(1D-myo-inositol-3,5-bisphosphate)</name>
        <dbReference type="ChEBI" id="CHEBI:57923"/>
    </ligand>
</feature>
<feature type="binding site" evidence="1">
    <location>
        <position position="453"/>
    </location>
    <ligand>
        <name>a 1,2-diacyl-sn-glycero-3-phospho-(1D-myo-inositol-3,5-bisphosphate)</name>
        <dbReference type="ChEBI" id="CHEBI:57923"/>
    </ligand>
</feature>
<feature type="binding site" evidence="1">
    <location>
        <position position="453"/>
    </location>
    <ligand>
        <name>a 1,2-diacyl-sn-glycero-3-phospho-(1D-myo-inositol-3-phosphate)</name>
        <dbReference type="ChEBI" id="CHEBI:58088"/>
    </ligand>
</feature>
<feature type="binding site" evidence="3">
    <location>
        <position position="1120"/>
    </location>
    <ligand>
        <name>Zn(2+)</name>
        <dbReference type="ChEBI" id="CHEBI:29105"/>
        <label>1</label>
    </ligand>
</feature>
<feature type="binding site" evidence="3">
    <location>
        <position position="1123"/>
    </location>
    <ligand>
        <name>Zn(2+)</name>
        <dbReference type="ChEBI" id="CHEBI:29105"/>
        <label>1</label>
    </ligand>
</feature>
<feature type="binding site" evidence="3">
    <location>
        <position position="1136"/>
    </location>
    <ligand>
        <name>Zn(2+)</name>
        <dbReference type="ChEBI" id="CHEBI:29105"/>
        <label>2</label>
    </ligand>
</feature>
<feature type="binding site" evidence="3">
    <location>
        <position position="1139"/>
    </location>
    <ligand>
        <name>Zn(2+)</name>
        <dbReference type="ChEBI" id="CHEBI:29105"/>
        <label>2</label>
    </ligand>
</feature>
<feature type="binding site" evidence="3">
    <location>
        <position position="1144"/>
    </location>
    <ligand>
        <name>Zn(2+)</name>
        <dbReference type="ChEBI" id="CHEBI:29105"/>
        <label>1</label>
    </ligand>
</feature>
<feature type="binding site" evidence="3">
    <location>
        <position position="1147"/>
    </location>
    <ligand>
        <name>Zn(2+)</name>
        <dbReference type="ChEBI" id="CHEBI:29105"/>
        <label>1</label>
    </ligand>
</feature>
<feature type="binding site" evidence="3">
    <location>
        <position position="1166"/>
    </location>
    <ligand>
        <name>Zn(2+)</name>
        <dbReference type="ChEBI" id="CHEBI:29105"/>
        <label>2</label>
    </ligand>
</feature>
<feature type="binding site" evidence="3">
    <location>
        <position position="1169"/>
    </location>
    <ligand>
        <name>Zn(2+)</name>
        <dbReference type="ChEBI" id="CHEBI:29105"/>
        <label>2</label>
    </ligand>
</feature>
<feature type="modified residue" description="Phosphoserine" evidence="27">
    <location>
        <position position="8"/>
    </location>
</feature>
<feature type="modified residue" description="Phosphoserine" evidence="27 28">
    <location>
        <position position="610"/>
    </location>
</feature>
<feature type="modified residue" description="Phosphoserine" evidence="27">
    <location>
        <position position="629"/>
    </location>
</feature>
<feature type="sequence variant" id="VAR_035110" description="In dbSNP:rs3744108." evidence="6 18">
    <original>L</original>
    <variation>V</variation>
    <location>
        <position position="170"/>
    </location>
</feature>
<feature type="sequence variant" id="VAR_035111" description="In dbSNP:rs2302190." evidence="7">
    <original>S</original>
    <variation>G</variation>
    <location>
        <position position="280"/>
    </location>
</feature>
<feature type="sequence variant" id="VAR_035112" description="In dbSNP:rs2302189.">
    <original>V</original>
    <variation>G</variation>
    <location>
        <position position="297"/>
    </location>
</feature>
<feature type="mutagenesis site" description="Loss of function in mitotic abscission. Decreased interaction with CEP55." evidence="13">
    <original>Y</original>
    <variation>A</variation>
    <location>
        <position position="11"/>
    </location>
</feature>
<feature type="mutagenesis site" description="Loss of phosphatase activity. Dominant negative." evidence="11">
    <original>C</original>
    <variation>A</variation>
    <location>
        <position position="407"/>
    </location>
</feature>
<feature type="mutagenesis site" description="No effect on function in mitotic abscission." evidence="13">
    <original>C</original>
    <variation>S</variation>
    <location>
        <position position="407"/>
    </location>
</feature>
<feature type="mutagenesis site" description="Loss of interaction with NEDD4. Loss of ubiquitination." evidence="9">
    <original>P</original>
    <variation>A</variation>
    <location>
        <position position="1006"/>
    </location>
</feature>
<feature type="mutagenesis site" description="Loss of localization to early endosome membranes. No effect on function in mitotic abscission." evidence="8 13">
    <original>C</original>
    <variation>S</variation>
    <location>
        <position position="1169"/>
    </location>
</feature>
<comment type="function">
    <text evidence="6 8 10 11 12 13 14 15 16 17">Lipid phosphatase that specifically dephosphorylates the D-3 position of phosphatidylinositol 3-phosphate and phosphatidylinositol 3,5-bisphosphate, generating phosphatidylinositol and phosphatidylinositol 5-phosphate (PubMed:11302699, PubMed:16787938, PubMed:20736309, PubMed:27625994, PubMed:29962048, PubMed:30944173). Decreases the levels of phosphatidylinositol 3-phosphate, a phospholipid found in cell membranes where it acts as key regulator of both cell signaling and intracellular membrane traffic, in a subset of endosomal membranes to negatively regulate both endocytic recycling and trafficking and/or maturation of endosomes toward lysosomes (PubMed:16787938, PubMed:20736309, PubMed:29962048). Through phosphatidylinositol 3-phosphate turnover in phagosome membranes regulates phagocytosis and phagosome maturation (PubMed:31543504). By decreasing phosphatidylinositol 3-monophosphate (PI3P) levels in immune cells it can also regulate the innate immune response (PubMed:30944173). Beside its lipid phosphatase activity, can also function as a molecular adapter to regulate midbody abscission during mitotic cytokinesis (PubMed:25659891). Can also negatively regulate TGF-beta and BMP signaling through Smad proteins dephosphorylation and retention in endosomes (PubMed:20061380, PubMed:23150675).</text>
</comment>
<comment type="catalytic activity">
    <reaction evidence="6 11">
        <text>a 1,2-diacyl-sn-glycero-3-phospho-(1D-myo-inositol-3-phosphate) + H2O = a 1,2-diacyl-sn-glycero-3-phospho-(1D-myo-inositol) + phosphate</text>
        <dbReference type="Rhea" id="RHEA:12316"/>
        <dbReference type="ChEBI" id="CHEBI:15377"/>
        <dbReference type="ChEBI" id="CHEBI:43474"/>
        <dbReference type="ChEBI" id="CHEBI:57880"/>
        <dbReference type="ChEBI" id="CHEBI:58088"/>
    </reaction>
    <physiologicalReaction direction="left-to-right" evidence="11">
        <dbReference type="Rhea" id="RHEA:12317"/>
    </physiologicalReaction>
</comment>
<comment type="catalytic activity">
    <reaction evidence="11">
        <text>a 1,2-diacyl-sn-glycero-3-phospho-(1D-myo-inositol-3,5-bisphosphate) + H2O = a 1,2-diacyl-sn-glycero-3-phospho-(1D-myo-inositol-5-phosphate) + phosphate</text>
        <dbReference type="Rhea" id="RHEA:39019"/>
        <dbReference type="ChEBI" id="CHEBI:15377"/>
        <dbReference type="ChEBI" id="CHEBI:43474"/>
        <dbReference type="ChEBI" id="CHEBI:57795"/>
        <dbReference type="ChEBI" id="CHEBI:57923"/>
        <dbReference type="EC" id="3.1.3.95"/>
    </reaction>
    <physiologicalReaction direction="left-to-right" evidence="11">
        <dbReference type="Rhea" id="RHEA:39020"/>
    </physiologicalReaction>
</comment>
<comment type="catalytic activity">
    <reaction evidence="6 11">
        <text>1,2-dioctanoyl-sn-glycero-3-phospho-(1-D-myo-inositol-3-phosphate) + H2O = 1,2-dioctanoyl-sn-glycero-3-phospho-(1D-myo-inositol) + phosphate</text>
        <dbReference type="Rhea" id="RHEA:42328"/>
        <dbReference type="ChEBI" id="CHEBI:15377"/>
        <dbReference type="ChEBI" id="CHEBI:43474"/>
        <dbReference type="ChEBI" id="CHEBI:65221"/>
        <dbReference type="ChEBI" id="CHEBI:78934"/>
    </reaction>
    <physiologicalReaction direction="left-to-right" evidence="11">
        <dbReference type="Rhea" id="RHEA:42329"/>
    </physiologicalReaction>
</comment>
<comment type="catalytic activity">
    <reaction evidence="11">
        <text>1,2-dioctanoyl-sn-glycero-3-phospho-(1D-myo-inositol-3,5-bisphosphate) + H2O = 1,2-dioctanoyl-sn-glycero-3-phospho-(1D-myo-inositol-5-phosphate) + phosphate</text>
        <dbReference type="Rhea" id="RHEA:45632"/>
        <dbReference type="ChEBI" id="CHEBI:15377"/>
        <dbReference type="ChEBI" id="CHEBI:43474"/>
        <dbReference type="ChEBI" id="CHEBI:78911"/>
        <dbReference type="ChEBI" id="CHEBI:85342"/>
    </reaction>
    <physiologicalReaction direction="left-to-right" evidence="11">
        <dbReference type="Rhea" id="RHEA:45633"/>
    </physiologicalReaction>
</comment>
<comment type="activity regulation">
    <text evidence="6">The phosphatidylinositol-3-phosphate phosphatase activity is inhibited by vanadate.</text>
</comment>
<comment type="subunit">
    <text evidence="8 10 12 13">Homooligomeric. Forms MTMR3:MTMR4 heterooligomers; regulates the localization of both proteins (PubMed:16787938, PubMed:25659891). The MTMR3:MTMR4 heterooligomer can also recruit both CEP55 and PLK1; occurs during early mitosis, regulates the phosphorylation of CEP55 by PLK1 and its recruitment to the midbody where it can mediate cell abscission (PubMed:25659891). Interacts with SMAD2 and SMAD3; negatively regulates TGF-beta signaling through SMAD2 and SMAD3 dephosphorylation and retention in endosomes (PubMed:20061380). Interacts with SMAD1; negatively regulates BMP signaling through SMAD1 dephosphorylation and retention in endosomes (PubMed:23150675).</text>
</comment>
<comment type="interaction">
    <interactant intactId="EBI-1052346">
        <id>Q9NYA4</id>
    </interactant>
    <interactant intactId="EBI-1040141">
        <id>Q15796</id>
        <label>SMAD2</label>
    </interactant>
    <organismsDiffer>false</organismsDiffer>
    <experiments>2</experiments>
</comment>
<comment type="interaction">
    <interactant intactId="EBI-1052346">
        <id>Q9NYA4</id>
    </interactant>
    <interactant intactId="EBI-347161">
        <id>P84022</id>
        <label>SMAD3</label>
    </interactant>
    <organismsDiffer>false</organismsDiffer>
    <experiments>2</experiments>
</comment>
<comment type="subcellular location">
    <subcellularLocation>
        <location evidence="6 8 11">Early endosome membrane</location>
        <topology evidence="6">Peripheral membrane protein</topology>
    </subcellularLocation>
    <subcellularLocation>
        <location evidence="11">Recycling endosome membrane</location>
        <topology evidence="6">Peripheral membrane protein</topology>
    </subcellularLocation>
    <subcellularLocation>
        <location evidence="15">Late endosome membrane</location>
        <topology evidence="6">Peripheral membrane protein</topology>
    </subcellularLocation>
    <subcellularLocation>
        <location evidence="17">Cytoplasmic vesicle</location>
        <location evidence="17">Phagosome membrane</location>
        <topology evidence="6">Peripheral membrane protein</topology>
    </subcellularLocation>
</comment>
<comment type="tissue specificity">
    <text evidence="6">Expressed in brain, heart, kidney, spleen, liver, colon, testis, muscle, placenta, thyroid gland, pancreas, ovary, prostate, skin, peripheral blood, and bone marrow.</text>
</comment>
<comment type="developmental stage">
    <text evidence="6">Expressed in fetal brain and fetal liver.</text>
</comment>
<comment type="domain">
    <text evidence="13">The coiled coil domain mediates the interaction between MTMR3 and MTMR4. It is essential to bring together CEP55 and PLK1 during mitotic abscission.</text>
</comment>
<comment type="PTM">
    <text evidence="9">Ubiquitinated. Ubiquitination by NEDD4 probably leads to proteasomal degradation.</text>
</comment>
<comment type="PTM">
    <text evidence="13">Phosphorylated by CDK1 during mitosis.</text>
</comment>
<comment type="similarity">
    <text evidence="20">Belongs to the protein-tyrosine phosphatase family. Non-receptor class myotubularin subfamily.</text>
</comment>
<comment type="caution">
    <text evidence="23 24">Although myotubularins have been classified as Protein Tyrosine Phosphatases (PTP), they are specific phosphoinositides 3-phosphatases and not protein phosphatases.</text>
</comment>
<organism>
    <name type="scientific">Homo sapiens</name>
    <name type="common">Human</name>
    <dbReference type="NCBI Taxonomy" id="9606"/>
    <lineage>
        <taxon>Eukaryota</taxon>
        <taxon>Metazoa</taxon>
        <taxon>Chordata</taxon>
        <taxon>Craniata</taxon>
        <taxon>Vertebrata</taxon>
        <taxon>Euteleostomi</taxon>
        <taxon>Mammalia</taxon>
        <taxon>Eutheria</taxon>
        <taxon>Euarchontoglires</taxon>
        <taxon>Primates</taxon>
        <taxon>Haplorrhini</taxon>
        <taxon>Catarrhini</taxon>
        <taxon>Hominidae</taxon>
        <taxon>Homo</taxon>
    </lineage>
</organism>
<name>MTMR4_HUMAN</name>
<proteinExistence type="evidence at protein level"/>
<reference key="1">
    <citation type="journal article" date="2001" name="Exp. Cell Res.">
        <title>FYVE-DSP2, a FYVE domain-containing dual specificity protein phosphatase that dephosphorylates phosphatidylinositol 3-phosphate.</title>
        <authorList>
            <person name="Zhao R."/>
            <person name="Qi Y."/>
            <person name="Chen J."/>
            <person name="Zhao Z.J."/>
        </authorList>
    </citation>
    <scope>NUCLEOTIDE SEQUENCE [MRNA]</scope>
    <scope>FUNCTION</scope>
    <scope>CATALYTIC ACTIVITY</scope>
    <scope>ACTIVITY REGULATION</scope>
    <scope>SUBCELLULAR LOCATION</scope>
    <scope>TOPOLOGY</scope>
    <scope>TISSUE SPECIFICITY</scope>
    <scope>DEVELOPMENTAL STAGE</scope>
    <scope>VARIANT VAL-170</scope>
</reference>
<reference key="2">
    <citation type="journal article" date="1998" name="DNA Res.">
        <title>Prediction of the coding sequences of unidentified human genes. X. The complete sequences of 100 new cDNA clones from brain which can code for large proteins in vitro.</title>
        <authorList>
            <person name="Ishikawa K."/>
            <person name="Nagase T."/>
            <person name="Suyama M."/>
            <person name="Miyajima N."/>
            <person name="Tanaka A."/>
            <person name="Kotani H."/>
            <person name="Nomura N."/>
            <person name="Ohara O."/>
        </authorList>
    </citation>
    <scope>NUCLEOTIDE SEQUENCE [LARGE SCALE MRNA]</scope>
    <scope>VARIANT VAL-170</scope>
    <source>
        <tissue>Brain</tissue>
    </source>
</reference>
<reference key="3">
    <citation type="journal article" date="2002" name="DNA Res.">
        <title>Construction of expression-ready cDNA clones for KIAA genes: manual curation of 330 KIAA cDNA clones.</title>
        <authorList>
            <person name="Nakajima D."/>
            <person name="Okazaki N."/>
            <person name="Yamakawa H."/>
            <person name="Kikuno R."/>
            <person name="Ohara O."/>
            <person name="Nagase T."/>
        </authorList>
    </citation>
    <scope>SEQUENCE REVISION</scope>
</reference>
<reference key="4">
    <citation type="journal article" date="2006" name="Nature">
        <title>DNA sequence of human chromosome 17 and analysis of rearrangement in the human lineage.</title>
        <authorList>
            <person name="Zody M.C."/>
            <person name="Garber M."/>
            <person name="Adams D.J."/>
            <person name="Sharpe T."/>
            <person name="Harrow J."/>
            <person name="Lupski J.R."/>
            <person name="Nicholson C."/>
            <person name="Searle S.M."/>
            <person name="Wilming L."/>
            <person name="Young S.K."/>
            <person name="Abouelleil A."/>
            <person name="Allen N.R."/>
            <person name="Bi W."/>
            <person name="Bloom T."/>
            <person name="Borowsky M.L."/>
            <person name="Bugalter B.E."/>
            <person name="Butler J."/>
            <person name="Chang J.L."/>
            <person name="Chen C.-K."/>
            <person name="Cook A."/>
            <person name="Corum B."/>
            <person name="Cuomo C.A."/>
            <person name="de Jong P.J."/>
            <person name="DeCaprio D."/>
            <person name="Dewar K."/>
            <person name="FitzGerald M."/>
            <person name="Gilbert J."/>
            <person name="Gibson R."/>
            <person name="Gnerre S."/>
            <person name="Goldstein S."/>
            <person name="Grafham D.V."/>
            <person name="Grocock R."/>
            <person name="Hafez N."/>
            <person name="Hagopian D.S."/>
            <person name="Hart E."/>
            <person name="Norman C.H."/>
            <person name="Humphray S."/>
            <person name="Jaffe D.B."/>
            <person name="Jones M."/>
            <person name="Kamal M."/>
            <person name="Khodiyar V.K."/>
            <person name="LaButti K."/>
            <person name="Laird G."/>
            <person name="Lehoczky J."/>
            <person name="Liu X."/>
            <person name="Lokyitsang T."/>
            <person name="Loveland J."/>
            <person name="Lui A."/>
            <person name="Macdonald P."/>
            <person name="Major J.E."/>
            <person name="Matthews L."/>
            <person name="Mauceli E."/>
            <person name="McCarroll S.A."/>
            <person name="Mihalev A.H."/>
            <person name="Mudge J."/>
            <person name="Nguyen C."/>
            <person name="Nicol R."/>
            <person name="O'Leary S.B."/>
            <person name="Osoegawa K."/>
            <person name="Schwartz D.C."/>
            <person name="Shaw-Smith C."/>
            <person name="Stankiewicz P."/>
            <person name="Steward C."/>
            <person name="Swarbreck D."/>
            <person name="Venkataraman V."/>
            <person name="Whittaker C.A."/>
            <person name="Yang X."/>
            <person name="Zimmer A.R."/>
            <person name="Bradley A."/>
            <person name="Hubbard T."/>
            <person name="Birren B.W."/>
            <person name="Rogers J."/>
            <person name="Lander E.S."/>
            <person name="Nusbaum C."/>
        </authorList>
    </citation>
    <scope>NUCLEOTIDE SEQUENCE [LARGE SCALE GENOMIC DNA]</scope>
</reference>
<reference key="5">
    <citation type="submission" date="2005-09" db="EMBL/GenBank/DDBJ databases">
        <authorList>
            <person name="Mural R.J."/>
            <person name="Istrail S."/>
            <person name="Sutton G.G."/>
            <person name="Florea L."/>
            <person name="Halpern A.L."/>
            <person name="Mobarry C.M."/>
            <person name="Lippert R."/>
            <person name="Walenz B."/>
            <person name="Shatkay H."/>
            <person name="Dew I."/>
            <person name="Miller J.R."/>
            <person name="Flanigan M.J."/>
            <person name="Edwards N.J."/>
            <person name="Bolanos R."/>
            <person name="Fasulo D."/>
            <person name="Halldorsson B.V."/>
            <person name="Hannenhalli S."/>
            <person name="Turner R."/>
            <person name="Yooseph S."/>
            <person name="Lu F."/>
            <person name="Nusskern D.R."/>
            <person name="Shue B.C."/>
            <person name="Zheng X.H."/>
            <person name="Zhong F."/>
            <person name="Delcher A.L."/>
            <person name="Huson D.H."/>
            <person name="Kravitz S.A."/>
            <person name="Mouchard L."/>
            <person name="Reinert K."/>
            <person name="Remington K.A."/>
            <person name="Clark A.G."/>
            <person name="Waterman M.S."/>
            <person name="Eichler E.E."/>
            <person name="Adams M.D."/>
            <person name="Hunkapiller M.W."/>
            <person name="Myers E.W."/>
            <person name="Venter J.C."/>
        </authorList>
    </citation>
    <scope>NUCLEOTIDE SEQUENCE [LARGE SCALE GENOMIC DNA]</scope>
</reference>
<reference key="6">
    <citation type="journal article" date="2004" name="Genome Res.">
        <title>The status, quality, and expansion of the NIH full-length cDNA project: the Mammalian Gene Collection (MGC).</title>
        <authorList>
            <consortium name="The MGC Project Team"/>
        </authorList>
    </citation>
    <scope>NUCLEOTIDE SEQUENCE [LARGE SCALE MRNA]</scope>
    <scope>VARIANT GLY-280</scope>
    <source>
        <tissue>Lung</tissue>
    </source>
</reference>
<reference key="7">
    <citation type="journal article" date="2006" name="J. Cell Sci.">
        <title>Systematic analysis of myotubularins: heteromeric interactions, subcellular localisation and endosome related functions.</title>
        <authorList>
            <person name="Lorenzo O."/>
            <person name="Urbe S."/>
            <person name="Clague M.J."/>
        </authorList>
    </citation>
    <scope>FUNCTION</scope>
    <scope>SUBUNIT</scope>
    <scope>INTERACTION WITH MTMR3</scope>
    <scope>SUBCELLULAR LOCATION</scope>
    <scope>MUTAGENESIS OF CYS-1169</scope>
</reference>
<reference key="8">
    <citation type="journal article" date="2009" name="Biochem. J.">
        <title>The inositol phosphatase MTMR4 is a novel target of the ubiquitin ligase Nedd4.</title>
        <authorList>
            <person name="Plant P.J."/>
            <person name="Correa J."/>
            <person name="Goldenberg N."/>
            <person name="Bain J."/>
            <person name="Batt J."/>
        </authorList>
    </citation>
    <scope>UBIQUITINATION</scope>
    <scope>MUTAGENESIS OF PRO-1006</scope>
    <scope>MOTIF</scope>
</reference>
<reference key="9">
    <citation type="journal article" date="2010" name="J. Biol. Chem.">
        <title>MTMR4 attenuates transforming growth factor beta (TGFbeta) signaling by dephosphorylating R-Smads in endosomes.</title>
        <authorList>
            <person name="Yu J."/>
            <person name="Pan L."/>
            <person name="Qin X."/>
            <person name="Chen H."/>
            <person name="Xu Y."/>
            <person name="Chen Y."/>
            <person name="Tang H."/>
        </authorList>
    </citation>
    <scope>FUNCTION</scope>
    <scope>INTERACTION WITH SMAD2 AND SMAD3</scope>
</reference>
<reference key="10">
    <citation type="journal article" date="2010" name="J. Cell Sci.">
        <title>The myotubularin phosphatase MTMR4 regulates sorting from early endosomes.</title>
        <authorList>
            <person name="Naughtin M.J."/>
            <person name="Sheffield D.A."/>
            <person name="Rahman P."/>
            <person name="Hughes W.E."/>
            <person name="Gurung R."/>
            <person name="Stow J.L."/>
            <person name="Nandurkar H.H."/>
            <person name="Dyson J.M."/>
            <person name="Mitchell C.A."/>
        </authorList>
    </citation>
    <scope>FUNCTION</scope>
    <scope>CATALYTIC ACTIVITY</scope>
    <scope>SUBCELLULAR LOCATION</scope>
    <scope>MUTAGENESIS OF CYS-407</scope>
</reference>
<reference key="11">
    <citation type="journal article" date="2013" name="J. Biol. Chem.">
        <title>Myotubularin-related protein 4 (MTMR4) attenuates BMP/Dpp signaling by dephosphorylation of Smad proteins.</title>
        <authorList>
            <person name="Yu J."/>
            <person name="He X."/>
            <person name="Chen Y.G."/>
            <person name="Hao Y."/>
            <person name="Yang S."/>
            <person name="Wang L."/>
            <person name="Pan L."/>
            <person name="Tang H."/>
        </authorList>
    </citation>
    <scope>FUNCTION</scope>
    <scope>INTERACTION WITH SMAD1</scope>
</reference>
<reference key="12">
    <citation type="journal article" date="2013" name="J. Proteome Res.">
        <title>Toward a comprehensive characterization of a human cancer cell phosphoproteome.</title>
        <authorList>
            <person name="Zhou H."/>
            <person name="Di Palma S."/>
            <person name="Preisinger C."/>
            <person name="Peng M."/>
            <person name="Polat A.N."/>
            <person name="Heck A.J."/>
            <person name="Mohammed S."/>
        </authorList>
    </citation>
    <scope>PHOSPHORYLATION [LARGE SCALE ANALYSIS] AT SER-8; SER-610 AND SER-629</scope>
    <scope>IDENTIFICATION BY MASS SPECTROMETRY [LARGE SCALE ANALYSIS]</scope>
    <source>
        <tissue>Erythroleukemia</tissue>
    </source>
</reference>
<reference key="13">
    <citation type="journal article" date="2014" name="J. Proteomics">
        <title>An enzyme assisted RP-RPLC approach for in-depth analysis of human liver phosphoproteome.</title>
        <authorList>
            <person name="Bian Y."/>
            <person name="Song C."/>
            <person name="Cheng K."/>
            <person name="Dong M."/>
            <person name="Wang F."/>
            <person name="Huang J."/>
            <person name="Sun D."/>
            <person name="Wang L."/>
            <person name="Ye M."/>
            <person name="Zou H."/>
        </authorList>
    </citation>
    <scope>PHOSPHORYLATION [LARGE SCALE ANALYSIS] AT SER-610</scope>
    <scope>IDENTIFICATION BY MASS SPECTROMETRY [LARGE SCALE ANALYSIS]</scope>
    <source>
        <tissue>Liver</tissue>
    </source>
</reference>
<reference key="14">
    <citation type="journal article" date="2015" name="Mol. Cell. Proteomics">
        <title>Myotubularin-related proteins 3 and 4 interact with polo-like kinase 1 and centrosomal protein of 55 kDa to ensure proper abscission.</title>
        <authorList>
            <person name="St-Denis N."/>
            <person name="Gupta G.D."/>
            <person name="Lin Z.Y."/>
            <person name="Gonzalez-Badillo B."/>
            <person name="Pelletier L."/>
            <person name="Gingras A.C."/>
        </authorList>
    </citation>
    <scope>FUNCTION</scope>
    <scope>SUBUNIT</scope>
    <scope>INTERACTION WITH CEP55 AND PLK1</scope>
    <scope>DOMAIN</scope>
    <scope>PHOSPHORYLATION</scope>
    <scope>CAUTION</scope>
    <scope>MUTAGENESIS OF TYR-11; CYS-407 AND CYS-1169</scope>
</reference>
<reference key="15">
    <citation type="journal article" date="2016" name="Front. Cell. Infect. Microbiol.">
        <title>MTMR4 Is Required for the Stability of the Salmonella-Containing Vacuole.</title>
        <authorList>
            <person name="Teo W.X."/>
            <person name="Kerr M.C."/>
            <person name="Teasdale R.D."/>
        </authorList>
    </citation>
    <scope>FUNCTION</scope>
</reference>
<reference key="16">
    <citation type="journal article" date="2018" name="Genes Cells">
        <title>MTMR4, a phosphoinositide-specific 3'-phosphatase, regulates TFEB activity and the endocytic and autophagic pathways.</title>
        <authorList>
            <person name="Pham H.Q."/>
            <person name="Yoshioka K."/>
            <person name="Mohri H."/>
            <person name="Nakata H."/>
            <person name="Aki S."/>
            <person name="Ishimaru K."/>
            <person name="Takuwa N."/>
            <person name="Takuwa Y."/>
        </authorList>
    </citation>
    <scope>FUNCTION</scope>
    <scope>SUBCELLULAR LOCATION</scope>
</reference>
<reference key="17">
    <citation type="journal article" date="2019" name="J. Biol. Chem.">
        <title>PtdIns3P phosphatases MTMR3 and MTMR4 negatively regulate innate immune responses to DNA through modulating STING trafficking.</title>
        <authorList>
            <person name="Dewi Pamungkas Putri D."/>
            <person name="Kawasaki T."/>
            <person name="Murase M."/>
            <person name="Sueyoshi T."/>
            <person name="Deguchi T."/>
            <person name="Ori D."/>
            <person name="Suetsugu S."/>
            <person name="Kawai T."/>
        </authorList>
    </citation>
    <scope>FUNCTION</scope>
</reference>
<reference key="18">
    <citation type="journal article" date="2019" name="J. Biol. Chem.">
        <title>The myotubularin MTMR4 regulates phagosomal phosphatidylinositol 3-phosphate turnover and phagocytosis.</title>
        <authorList>
            <person name="Sheffield D.A."/>
            <person name="Jepsen M.R."/>
            <person name="Feeney S.J."/>
            <person name="Bertucci M.C."/>
            <person name="Sriratana A."/>
            <person name="Naughtin M.J."/>
            <person name="Dyson J.M."/>
            <person name="Coppel R.L."/>
            <person name="Mitchell C.A."/>
        </authorList>
    </citation>
    <scope>FUNCTION</scope>
    <scope>SUBCELLULAR LOCATION</scope>
    <scope>CAUTION</scope>
</reference>
<protein>
    <recommendedName>
        <fullName evidence="21 22">Phosphatidylinositol-3,5-bisphosphate 3-phosphatase MTMR4</fullName>
        <ecNumber evidence="11">3.1.3.95</ecNumber>
    </recommendedName>
    <alternativeName>
        <fullName evidence="19">FYVE domain-containing dual specificity protein phosphatase 2</fullName>
        <shortName evidence="19">FYVE-DSP2</shortName>
    </alternativeName>
    <alternativeName>
        <fullName evidence="26">Myotubularin-related protein 4</fullName>
    </alternativeName>
    <alternativeName>
        <fullName evidence="22">Phosphatidylinositol-3,5-bisphosphate 3-phosphatase</fullName>
    </alternativeName>
    <alternativeName>
        <fullName evidence="26">Zinc finger FYVE domain-containing protein 11</fullName>
    </alternativeName>
</protein>